<comment type="function">
    <text evidence="1">Involved in peptide bond synthesis. Stimulates efficient translation and peptide-bond synthesis on native or reconstituted 70S ribosomes in vitro. Probably functions indirectly by altering the affinity of the ribosome for aminoacyl-tRNA, thus increasing their reactivity as acceptors for peptidyl transferase.</text>
</comment>
<comment type="pathway">
    <text evidence="1">Protein biosynthesis; polypeptide chain elongation.</text>
</comment>
<comment type="subcellular location">
    <subcellularLocation>
        <location evidence="1">Cytoplasm</location>
    </subcellularLocation>
</comment>
<comment type="similarity">
    <text evidence="1">Belongs to the elongation factor P family.</text>
</comment>
<feature type="chain" id="PRO_1000010760" description="Elongation factor P">
    <location>
        <begin position="1"/>
        <end position="187"/>
    </location>
</feature>
<sequence>MAIGMSELKKGLKIELGGVPYRIVEYQHVKPGKGAAFVRAKIKSFLDGKVIEKTFHAGDKCEEPNLVEKTMQYLYHDGDAYQFMDIESYEQIALSDSQVGEASKWMLDGMQVQVLLYNDKAISVDVPQVVALKIVETAPNFKGDTSSASKKPATLETGAVVQVPFHVLEGEIIKVNTETEEYLEKVK</sequence>
<gene>
    <name evidence="1" type="primary">efp</name>
    <name type="ordered locus">Hac_0358</name>
</gene>
<dbReference type="EMBL" id="AM260522">
    <property type="protein sequence ID" value="CAJ99196.1"/>
    <property type="molecule type" value="Genomic_DNA"/>
</dbReference>
<dbReference type="RefSeq" id="WP_011577311.1">
    <property type="nucleotide sequence ID" value="NC_008229.1"/>
</dbReference>
<dbReference type="SMR" id="Q17YT0"/>
<dbReference type="STRING" id="382638.Hac_0358"/>
<dbReference type="GeneID" id="31757868"/>
<dbReference type="KEGG" id="hac:Hac_0358"/>
<dbReference type="eggNOG" id="COG0231">
    <property type="taxonomic scope" value="Bacteria"/>
</dbReference>
<dbReference type="HOGENOM" id="CLU_074944_0_1_7"/>
<dbReference type="OrthoDB" id="9801844at2"/>
<dbReference type="BioCyc" id="HACI382638:HAC_RS01610-MONOMER"/>
<dbReference type="UniPathway" id="UPA00345"/>
<dbReference type="Proteomes" id="UP000000775">
    <property type="component" value="Chromosome"/>
</dbReference>
<dbReference type="GO" id="GO:0005737">
    <property type="term" value="C:cytoplasm"/>
    <property type="evidence" value="ECO:0007669"/>
    <property type="project" value="UniProtKB-SubCell"/>
</dbReference>
<dbReference type="GO" id="GO:0003746">
    <property type="term" value="F:translation elongation factor activity"/>
    <property type="evidence" value="ECO:0007669"/>
    <property type="project" value="UniProtKB-UniRule"/>
</dbReference>
<dbReference type="GO" id="GO:0043043">
    <property type="term" value="P:peptide biosynthetic process"/>
    <property type="evidence" value="ECO:0007669"/>
    <property type="project" value="InterPro"/>
</dbReference>
<dbReference type="CDD" id="cd04470">
    <property type="entry name" value="S1_EF-P_repeat_1"/>
    <property type="match status" value="1"/>
</dbReference>
<dbReference type="CDD" id="cd05794">
    <property type="entry name" value="S1_EF-P_repeat_2"/>
    <property type="match status" value="1"/>
</dbReference>
<dbReference type="FunFam" id="2.30.30.30:FF:000003">
    <property type="entry name" value="Elongation factor P"/>
    <property type="match status" value="1"/>
</dbReference>
<dbReference type="FunFam" id="2.40.50.140:FF:000004">
    <property type="entry name" value="Elongation factor P"/>
    <property type="match status" value="1"/>
</dbReference>
<dbReference type="FunFam" id="2.40.50.140:FF:000009">
    <property type="entry name" value="Elongation factor P"/>
    <property type="match status" value="1"/>
</dbReference>
<dbReference type="Gene3D" id="2.30.30.30">
    <property type="match status" value="1"/>
</dbReference>
<dbReference type="Gene3D" id="2.40.50.140">
    <property type="entry name" value="Nucleic acid-binding proteins"/>
    <property type="match status" value="2"/>
</dbReference>
<dbReference type="HAMAP" id="MF_00141">
    <property type="entry name" value="EF_P"/>
    <property type="match status" value="1"/>
</dbReference>
<dbReference type="InterPro" id="IPR015365">
    <property type="entry name" value="Elong-fact-P_C"/>
</dbReference>
<dbReference type="InterPro" id="IPR012340">
    <property type="entry name" value="NA-bd_OB-fold"/>
</dbReference>
<dbReference type="InterPro" id="IPR014722">
    <property type="entry name" value="Rib_uL2_dom2"/>
</dbReference>
<dbReference type="InterPro" id="IPR020599">
    <property type="entry name" value="Transl_elong_fac_P/YeiP"/>
</dbReference>
<dbReference type="InterPro" id="IPR013185">
    <property type="entry name" value="Transl_elong_KOW-like"/>
</dbReference>
<dbReference type="InterPro" id="IPR001059">
    <property type="entry name" value="Transl_elong_P/YeiP_cen"/>
</dbReference>
<dbReference type="InterPro" id="IPR013852">
    <property type="entry name" value="Transl_elong_P/YeiP_CS"/>
</dbReference>
<dbReference type="InterPro" id="IPR011768">
    <property type="entry name" value="Transl_elongation_fac_P"/>
</dbReference>
<dbReference type="InterPro" id="IPR008991">
    <property type="entry name" value="Translation_prot_SH3-like_sf"/>
</dbReference>
<dbReference type="NCBIfam" id="TIGR00038">
    <property type="entry name" value="efp"/>
    <property type="match status" value="1"/>
</dbReference>
<dbReference type="NCBIfam" id="NF001810">
    <property type="entry name" value="PRK00529.1"/>
    <property type="match status" value="1"/>
</dbReference>
<dbReference type="PANTHER" id="PTHR30053">
    <property type="entry name" value="ELONGATION FACTOR P"/>
    <property type="match status" value="1"/>
</dbReference>
<dbReference type="PANTHER" id="PTHR30053:SF12">
    <property type="entry name" value="ELONGATION FACTOR P (EF-P) FAMILY PROTEIN"/>
    <property type="match status" value="1"/>
</dbReference>
<dbReference type="Pfam" id="PF01132">
    <property type="entry name" value="EFP"/>
    <property type="match status" value="1"/>
</dbReference>
<dbReference type="Pfam" id="PF08207">
    <property type="entry name" value="EFP_N"/>
    <property type="match status" value="1"/>
</dbReference>
<dbReference type="Pfam" id="PF09285">
    <property type="entry name" value="Elong-fact-P_C"/>
    <property type="match status" value="1"/>
</dbReference>
<dbReference type="PIRSF" id="PIRSF005901">
    <property type="entry name" value="EF-P"/>
    <property type="match status" value="1"/>
</dbReference>
<dbReference type="SMART" id="SM01185">
    <property type="entry name" value="EFP"/>
    <property type="match status" value="1"/>
</dbReference>
<dbReference type="SMART" id="SM00841">
    <property type="entry name" value="Elong-fact-P_C"/>
    <property type="match status" value="1"/>
</dbReference>
<dbReference type="SUPFAM" id="SSF50249">
    <property type="entry name" value="Nucleic acid-binding proteins"/>
    <property type="match status" value="2"/>
</dbReference>
<dbReference type="SUPFAM" id="SSF50104">
    <property type="entry name" value="Translation proteins SH3-like domain"/>
    <property type="match status" value="1"/>
</dbReference>
<dbReference type="PROSITE" id="PS01275">
    <property type="entry name" value="EFP"/>
    <property type="match status" value="1"/>
</dbReference>
<keyword id="KW-0963">Cytoplasm</keyword>
<keyword id="KW-0251">Elongation factor</keyword>
<keyword id="KW-0648">Protein biosynthesis</keyword>
<organism>
    <name type="scientific">Helicobacter acinonychis (strain Sheeba)</name>
    <dbReference type="NCBI Taxonomy" id="382638"/>
    <lineage>
        <taxon>Bacteria</taxon>
        <taxon>Pseudomonadati</taxon>
        <taxon>Campylobacterota</taxon>
        <taxon>Epsilonproteobacteria</taxon>
        <taxon>Campylobacterales</taxon>
        <taxon>Helicobacteraceae</taxon>
        <taxon>Helicobacter</taxon>
    </lineage>
</organism>
<evidence type="ECO:0000255" key="1">
    <source>
        <dbReference type="HAMAP-Rule" id="MF_00141"/>
    </source>
</evidence>
<protein>
    <recommendedName>
        <fullName evidence="1">Elongation factor P</fullName>
        <shortName evidence="1">EF-P</shortName>
    </recommendedName>
</protein>
<proteinExistence type="inferred from homology"/>
<name>EFP_HELAH</name>
<reference key="1">
    <citation type="journal article" date="2006" name="PLoS Genet.">
        <title>Who ate whom? Adaptive Helicobacter genomic changes that accompanied a host jump from early humans to large felines.</title>
        <authorList>
            <person name="Eppinger M."/>
            <person name="Baar C."/>
            <person name="Linz B."/>
            <person name="Raddatz G."/>
            <person name="Lanz C."/>
            <person name="Keller H."/>
            <person name="Morelli G."/>
            <person name="Gressmann H."/>
            <person name="Achtman M."/>
            <person name="Schuster S.C."/>
        </authorList>
    </citation>
    <scope>NUCLEOTIDE SEQUENCE [LARGE SCALE GENOMIC DNA]</scope>
    <source>
        <strain>Sheeba</strain>
    </source>
</reference>
<accession>Q17YT0</accession>